<comment type="function">
    <text>Metallothioneins have a high content of cysteine residues that bind various heavy metals; these proteins are transcriptionally regulated by both heavy metals and glucocorticoids.</text>
</comment>
<comment type="domain">
    <text>Class I metallothioneins contain 2 metal-binding domains: four divalent ions are chelated within cluster A of the alpha domain and are coordinated via cysteinyl thiolate bridges to 11 cysteine ligands. Cluster B, the corresponding region within the beta domain, can ligate three divalent ions to 9 cysteines.</text>
</comment>
<comment type="similarity">
    <text evidence="3">Belongs to the metallothionein superfamily. Type 1 family.</text>
</comment>
<accession>P02797</accession>
<sequence>MDPNCSCATGVSCTCADSCKCKECKCTSCKKSCCSCCPVGCAKCAQGCVCKGASEKCNCCA</sequence>
<protein>
    <recommendedName>
        <fullName>Metallothionein-1</fullName>
        <shortName>MT-1</shortName>
    </recommendedName>
    <alternativeName>
        <fullName>Metallothionein-I</fullName>
        <shortName>MT-I</shortName>
    </alternativeName>
</protein>
<reference key="1">
    <citation type="journal article" date="1983" name="Gene">
        <title>Cloning and sequence analysis of two monkey metallothionein cDNAs.</title>
        <authorList>
            <person name="Schmidt C.J."/>
            <person name="Hamer D.H."/>
        </authorList>
    </citation>
    <scope>NUCLEOTIDE SEQUENCE [GENOMIC DNA]</scope>
    <source>
        <tissue>Kidney</tissue>
    </source>
</reference>
<organism>
    <name type="scientific">Chlorocebus aethiops</name>
    <name type="common">Green monkey</name>
    <name type="synonym">Cercopithecus aethiops</name>
    <dbReference type="NCBI Taxonomy" id="9534"/>
    <lineage>
        <taxon>Eukaryota</taxon>
        <taxon>Metazoa</taxon>
        <taxon>Chordata</taxon>
        <taxon>Craniata</taxon>
        <taxon>Vertebrata</taxon>
        <taxon>Euteleostomi</taxon>
        <taxon>Mammalia</taxon>
        <taxon>Eutheria</taxon>
        <taxon>Euarchontoglires</taxon>
        <taxon>Primates</taxon>
        <taxon>Haplorrhini</taxon>
        <taxon>Catarrhini</taxon>
        <taxon>Cercopithecidae</taxon>
        <taxon>Cercopithecinae</taxon>
        <taxon>Chlorocebus</taxon>
    </lineage>
</organism>
<dbReference type="EMBL" id="V01533">
    <property type="protein sequence ID" value="CAA24772.1"/>
    <property type="molecule type" value="Genomic_DNA"/>
</dbReference>
<dbReference type="PIR" id="A03273">
    <property type="entry name" value="SMMK1"/>
</dbReference>
<dbReference type="SMR" id="P02797"/>
<dbReference type="GO" id="GO:0005737">
    <property type="term" value="C:cytoplasm"/>
    <property type="evidence" value="ECO:0000250"/>
    <property type="project" value="UniProtKB"/>
</dbReference>
<dbReference type="GO" id="GO:0005634">
    <property type="term" value="C:nucleus"/>
    <property type="evidence" value="ECO:0000250"/>
    <property type="project" value="UniProtKB"/>
</dbReference>
<dbReference type="GO" id="GO:0008270">
    <property type="term" value="F:zinc ion binding"/>
    <property type="evidence" value="ECO:0000250"/>
    <property type="project" value="UniProtKB"/>
</dbReference>
<dbReference type="GO" id="GO:0071276">
    <property type="term" value="P:cellular response to cadmium ion"/>
    <property type="evidence" value="ECO:0007669"/>
    <property type="project" value="TreeGrafter"/>
</dbReference>
<dbReference type="GO" id="GO:0071280">
    <property type="term" value="P:cellular response to copper ion"/>
    <property type="evidence" value="ECO:0007669"/>
    <property type="project" value="TreeGrafter"/>
</dbReference>
<dbReference type="GO" id="GO:0071294">
    <property type="term" value="P:cellular response to zinc ion"/>
    <property type="evidence" value="ECO:0000250"/>
    <property type="project" value="UniProtKB"/>
</dbReference>
<dbReference type="GO" id="GO:0010273">
    <property type="term" value="P:detoxification of copper ion"/>
    <property type="evidence" value="ECO:0007669"/>
    <property type="project" value="TreeGrafter"/>
</dbReference>
<dbReference type="GO" id="GO:0006882">
    <property type="term" value="P:intracellular zinc ion homeostasis"/>
    <property type="evidence" value="ECO:0007669"/>
    <property type="project" value="TreeGrafter"/>
</dbReference>
<dbReference type="GO" id="GO:0045926">
    <property type="term" value="P:negative regulation of growth"/>
    <property type="evidence" value="ECO:0000250"/>
    <property type="project" value="UniProtKB"/>
</dbReference>
<dbReference type="FunFam" id="4.10.10.10:FF:000001">
    <property type="entry name" value="Metallothionein"/>
    <property type="match status" value="1"/>
</dbReference>
<dbReference type="Gene3D" id="4.10.10.10">
    <property type="entry name" value="Metallothionein Isoform II"/>
    <property type="match status" value="1"/>
</dbReference>
<dbReference type="InterPro" id="IPR017854">
    <property type="entry name" value="Metalthion_dom_sf"/>
</dbReference>
<dbReference type="InterPro" id="IPR023587">
    <property type="entry name" value="Metalthion_dom_sf_vert"/>
</dbReference>
<dbReference type="InterPro" id="IPR000006">
    <property type="entry name" value="Metalthion_vert"/>
</dbReference>
<dbReference type="InterPro" id="IPR018064">
    <property type="entry name" value="Metalthion_vert_metal_BS"/>
</dbReference>
<dbReference type="PANTHER" id="PTHR23299">
    <property type="entry name" value="METALLOTHIONEIN"/>
    <property type="match status" value="1"/>
</dbReference>
<dbReference type="PANTHER" id="PTHR23299:SF22">
    <property type="entry name" value="METALLOTHIONEIN-1G"/>
    <property type="match status" value="1"/>
</dbReference>
<dbReference type="Pfam" id="PF00131">
    <property type="entry name" value="Metallothio"/>
    <property type="match status" value="1"/>
</dbReference>
<dbReference type="PRINTS" id="PR00860">
    <property type="entry name" value="MTVERTEBRATE"/>
</dbReference>
<dbReference type="SUPFAM" id="SSF57868">
    <property type="entry name" value="Metallothionein"/>
    <property type="match status" value="1"/>
</dbReference>
<dbReference type="PROSITE" id="PS00203">
    <property type="entry name" value="METALLOTHIONEIN_VRT"/>
    <property type="match status" value="1"/>
</dbReference>
<evidence type="ECO:0000250" key="1">
    <source>
        <dbReference type="UniProtKB" id="P02795"/>
    </source>
</evidence>
<evidence type="ECO:0000250" key="2">
    <source>
        <dbReference type="UniProtKB" id="P02802"/>
    </source>
</evidence>
<evidence type="ECO:0000305" key="3"/>
<keyword id="KW-0007">Acetylation</keyword>
<keyword id="KW-0479">Metal-binding</keyword>
<keyword id="KW-0480">Metal-thiolate cluster</keyword>
<name>MT1_CHLAE</name>
<gene>
    <name type="primary">MT1</name>
</gene>
<proteinExistence type="inferred from homology"/>
<feature type="chain" id="PRO_0000197232" description="Metallothionein-1">
    <location>
        <begin position="1"/>
        <end position="61"/>
    </location>
</feature>
<feature type="region of interest" description="Beta">
    <location>
        <begin position="1"/>
        <end position="29"/>
    </location>
</feature>
<feature type="region of interest" description="Alpha">
    <location>
        <begin position="30"/>
        <end position="61"/>
    </location>
</feature>
<feature type="binding site" evidence="1">
    <location>
        <position position="5"/>
    </location>
    <ligand>
        <name>a divalent metal cation</name>
        <dbReference type="ChEBI" id="CHEBI:60240"/>
        <label>1</label>
        <note>in cluster B</note>
    </ligand>
</feature>
<feature type="binding site" evidence="1">
    <location>
        <position position="7"/>
    </location>
    <ligand>
        <name>a divalent metal cation</name>
        <dbReference type="ChEBI" id="CHEBI:60240"/>
        <label>1</label>
        <note>in cluster B</note>
    </ligand>
</feature>
<feature type="binding site" evidence="1">
    <location>
        <position position="7"/>
    </location>
    <ligand>
        <name>a divalent metal cation</name>
        <dbReference type="ChEBI" id="CHEBI:60240"/>
        <label>2</label>
        <note>in cluster B</note>
    </ligand>
</feature>
<feature type="binding site" evidence="1">
    <location>
        <position position="13"/>
    </location>
    <ligand>
        <name>a divalent metal cation</name>
        <dbReference type="ChEBI" id="CHEBI:60240"/>
        <label>2</label>
        <note>in cluster B</note>
    </ligand>
</feature>
<feature type="binding site" evidence="1">
    <location>
        <position position="15"/>
    </location>
    <ligand>
        <name>a divalent metal cation</name>
        <dbReference type="ChEBI" id="CHEBI:60240"/>
        <label>2</label>
        <note>in cluster B</note>
    </ligand>
</feature>
<feature type="binding site" evidence="1">
    <location>
        <position position="15"/>
    </location>
    <ligand>
        <name>a divalent metal cation</name>
        <dbReference type="ChEBI" id="CHEBI:60240"/>
        <label>3</label>
        <note>in cluster B</note>
    </ligand>
</feature>
<feature type="binding site" evidence="1">
    <location>
        <position position="19"/>
    </location>
    <ligand>
        <name>a divalent metal cation</name>
        <dbReference type="ChEBI" id="CHEBI:60240"/>
        <label>3</label>
        <note>in cluster B</note>
    </ligand>
</feature>
<feature type="binding site" evidence="1">
    <location>
        <position position="21"/>
    </location>
    <ligand>
        <name>a divalent metal cation</name>
        <dbReference type="ChEBI" id="CHEBI:60240"/>
        <label>1</label>
        <note>in cluster B</note>
    </ligand>
</feature>
<feature type="binding site" evidence="1">
    <location>
        <position position="24"/>
    </location>
    <ligand>
        <name>a divalent metal cation</name>
        <dbReference type="ChEBI" id="CHEBI:60240"/>
        <label>1</label>
        <note>in cluster B</note>
    </ligand>
</feature>
<feature type="binding site" evidence="1">
    <location>
        <position position="24"/>
    </location>
    <ligand>
        <name>a divalent metal cation</name>
        <dbReference type="ChEBI" id="CHEBI:60240"/>
        <label>3</label>
        <note>in cluster B</note>
    </ligand>
</feature>
<feature type="binding site" evidence="1">
    <location>
        <position position="26"/>
    </location>
    <ligand>
        <name>a divalent metal cation</name>
        <dbReference type="ChEBI" id="CHEBI:60240"/>
        <label>2</label>
        <note>in cluster B</note>
    </ligand>
</feature>
<feature type="binding site" evidence="1">
    <location>
        <position position="29"/>
    </location>
    <ligand>
        <name>a divalent metal cation</name>
        <dbReference type="ChEBI" id="CHEBI:60240"/>
        <label>3</label>
        <note>in cluster B</note>
    </ligand>
</feature>
<feature type="binding site" evidence="1">
    <location>
        <position position="33"/>
    </location>
    <ligand>
        <name>a divalent metal cation</name>
        <dbReference type="ChEBI" id="CHEBI:60240"/>
        <label>4</label>
        <note>in cluster A</note>
    </ligand>
</feature>
<feature type="binding site" evidence="1">
    <location>
        <position position="34"/>
    </location>
    <ligand>
        <name>a divalent metal cation</name>
        <dbReference type="ChEBI" id="CHEBI:60240"/>
        <label>4</label>
        <note>in cluster A</note>
    </ligand>
</feature>
<feature type="binding site" evidence="1">
    <location>
        <position position="34"/>
    </location>
    <ligand>
        <name>a divalent metal cation</name>
        <dbReference type="ChEBI" id="CHEBI:60240"/>
        <label>5</label>
        <note>in cluster A</note>
    </ligand>
</feature>
<feature type="binding site" evidence="1">
    <location>
        <position position="36"/>
    </location>
    <ligand>
        <name>a divalent metal cation</name>
        <dbReference type="ChEBI" id="CHEBI:60240"/>
        <label>5</label>
        <note>in cluster A</note>
    </ligand>
</feature>
<feature type="binding site" evidence="1">
    <location>
        <position position="37"/>
    </location>
    <ligand>
        <name>a divalent metal cation</name>
        <dbReference type="ChEBI" id="CHEBI:60240"/>
        <label>5</label>
        <note>in cluster A</note>
    </ligand>
</feature>
<feature type="binding site" evidence="1">
    <location>
        <position position="37"/>
    </location>
    <ligand>
        <name>a divalent metal cation</name>
        <dbReference type="ChEBI" id="CHEBI:60240"/>
        <label>6</label>
        <note>in cluster A</note>
    </ligand>
</feature>
<feature type="binding site" evidence="1">
    <location>
        <position position="41"/>
    </location>
    <ligand>
        <name>a divalent metal cation</name>
        <dbReference type="ChEBI" id="CHEBI:60240"/>
        <label>6</label>
        <note>in cluster A</note>
    </ligand>
</feature>
<feature type="binding site" evidence="1">
    <location>
        <position position="44"/>
    </location>
    <ligand>
        <name>a divalent metal cation</name>
        <dbReference type="ChEBI" id="CHEBI:60240"/>
        <label>4</label>
        <note>in cluster A</note>
    </ligand>
</feature>
<feature type="binding site" evidence="1">
    <location>
        <position position="44"/>
    </location>
    <ligand>
        <name>a divalent metal cation</name>
        <dbReference type="ChEBI" id="CHEBI:60240"/>
        <label>6</label>
        <note>in cluster A</note>
    </ligand>
</feature>
<feature type="binding site" evidence="1">
    <location>
        <position position="48"/>
    </location>
    <ligand>
        <name>a divalent metal cation</name>
        <dbReference type="ChEBI" id="CHEBI:60240"/>
        <label>4</label>
        <note>in cluster A</note>
    </ligand>
</feature>
<feature type="binding site" evidence="1">
    <location>
        <position position="50"/>
    </location>
    <ligand>
        <name>a divalent metal cation</name>
        <dbReference type="ChEBI" id="CHEBI:60240"/>
        <label>5</label>
        <note>in cluster A</note>
    </ligand>
</feature>
<feature type="binding site" evidence="1">
    <location>
        <position position="50"/>
    </location>
    <ligand>
        <name>a divalent metal cation</name>
        <dbReference type="ChEBI" id="CHEBI:60240"/>
        <label>7</label>
        <note>in cluster A</note>
    </ligand>
</feature>
<feature type="binding site" evidence="1">
    <location>
        <position position="57"/>
    </location>
    <ligand>
        <name>a divalent metal cation</name>
        <dbReference type="ChEBI" id="CHEBI:60240"/>
        <label>7</label>
        <note>in cluster A</note>
    </ligand>
</feature>
<feature type="binding site" evidence="1">
    <location>
        <position position="59"/>
    </location>
    <ligand>
        <name>a divalent metal cation</name>
        <dbReference type="ChEBI" id="CHEBI:60240"/>
        <label>7</label>
        <note>in cluster A</note>
    </ligand>
</feature>
<feature type="binding site" evidence="1">
    <location>
        <position position="60"/>
    </location>
    <ligand>
        <name>a divalent metal cation</name>
        <dbReference type="ChEBI" id="CHEBI:60240"/>
        <label>6</label>
        <note>in cluster A</note>
    </ligand>
</feature>
<feature type="binding site" evidence="1">
    <location>
        <position position="60"/>
    </location>
    <ligand>
        <name>a divalent metal cation</name>
        <dbReference type="ChEBI" id="CHEBI:60240"/>
        <label>7</label>
        <note>in cluster A</note>
    </ligand>
</feature>
<feature type="modified residue" description="N-acetylmethionine" evidence="2">
    <location>
        <position position="1"/>
    </location>
</feature>